<protein>
    <recommendedName>
        <fullName evidence="1">Ribonuclease HII</fullName>
        <shortName evidence="1">RNase HII</shortName>
        <ecNumber evidence="1">3.1.26.4</ecNumber>
    </recommendedName>
</protein>
<accession>Q97QP5</accession>
<reference key="1">
    <citation type="journal article" date="2001" name="Science">
        <title>Complete genome sequence of a virulent isolate of Streptococcus pneumoniae.</title>
        <authorList>
            <person name="Tettelin H."/>
            <person name="Nelson K.E."/>
            <person name="Paulsen I.T."/>
            <person name="Eisen J.A."/>
            <person name="Read T.D."/>
            <person name="Peterson S.N."/>
            <person name="Heidelberg J.F."/>
            <person name="DeBoy R.T."/>
            <person name="Haft D.H."/>
            <person name="Dodson R.J."/>
            <person name="Durkin A.S."/>
            <person name="Gwinn M.L."/>
            <person name="Kolonay J.F."/>
            <person name="Nelson W.C."/>
            <person name="Peterson J.D."/>
            <person name="Umayam L.A."/>
            <person name="White O."/>
            <person name="Salzberg S.L."/>
            <person name="Lewis M.R."/>
            <person name="Radune D."/>
            <person name="Holtzapple E.K."/>
            <person name="Khouri H.M."/>
            <person name="Wolf A.M."/>
            <person name="Utterback T.R."/>
            <person name="Hansen C.L."/>
            <person name="McDonald L.A."/>
            <person name="Feldblyum T.V."/>
            <person name="Angiuoli S.V."/>
            <person name="Dickinson T."/>
            <person name="Hickey E.K."/>
            <person name="Holt I.E."/>
            <person name="Loftus B.J."/>
            <person name="Yang F."/>
            <person name="Smith H.O."/>
            <person name="Venter J.C."/>
            <person name="Dougherty B.A."/>
            <person name="Morrison D.A."/>
            <person name="Hollingshead S.K."/>
            <person name="Fraser C.M."/>
        </authorList>
    </citation>
    <scope>NUCLEOTIDE SEQUENCE [LARGE SCALE GENOMIC DNA]</scope>
    <source>
        <strain>ATCC BAA-334 / TIGR4</strain>
    </source>
</reference>
<evidence type="ECO:0000255" key="1">
    <source>
        <dbReference type="HAMAP-Rule" id="MF_00052"/>
    </source>
</evidence>
<evidence type="ECO:0000255" key="2">
    <source>
        <dbReference type="PROSITE-ProRule" id="PRU01319"/>
    </source>
</evidence>
<organism>
    <name type="scientific">Streptococcus pneumoniae serotype 4 (strain ATCC BAA-334 / TIGR4)</name>
    <dbReference type="NCBI Taxonomy" id="170187"/>
    <lineage>
        <taxon>Bacteria</taxon>
        <taxon>Bacillati</taxon>
        <taxon>Bacillota</taxon>
        <taxon>Bacilli</taxon>
        <taxon>Lactobacillales</taxon>
        <taxon>Streptococcaceae</taxon>
        <taxon>Streptococcus</taxon>
    </lineage>
</organism>
<sequence>MATIKEIKEFLVTVKELESPIFLELEKDNRSGVQKEISKRKRAIQAELDENLRLESMLSYEKELYKQGLTLIAGIDEVGRGPLAGPVVAAAVILSKNCKIKGLNDSKKIPKKKHLEIFQAVQDQALSIGIGIIDNQVIDQVNIYEATKLAMQEAISQLSPQPEHLLIDAMKLDLPISQTSIIKGDANSLSIAAASIVAKVTRDELLKEYDQQFPGYDFATNAGYGTAKHLEGLTKLGVTPIHRTSFEPVKSLVLGKKES</sequence>
<feature type="chain" id="PRO_0000111634" description="Ribonuclease HII">
    <location>
        <begin position="1"/>
        <end position="259"/>
    </location>
</feature>
<feature type="domain" description="RNase H type-2" evidence="2">
    <location>
        <begin position="70"/>
        <end position="258"/>
    </location>
</feature>
<feature type="binding site" evidence="1">
    <location>
        <position position="76"/>
    </location>
    <ligand>
        <name>a divalent metal cation</name>
        <dbReference type="ChEBI" id="CHEBI:60240"/>
    </ligand>
</feature>
<feature type="binding site" evidence="1">
    <location>
        <position position="77"/>
    </location>
    <ligand>
        <name>a divalent metal cation</name>
        <dbReference type="ChEBI" id="CHEBI:60240"/>
    </ligand>
</feature>
<feature type="binding site" evidence="1">
    <location>
        <position position="168"/>
    </location>
    <ligand>
        <name>a divalent metal cation</name>
        <dbReference type="ChEBI" id="CHEBI:60240"/>
    </ligand>
</feature>
<dbReference type="EC" id="3.1.26.4" evidence="1"/>
<dbReference type="EMBL" id="AE005672">
    <property type="protein sequence ID" value="AAK75265.1"/>
    <property type="molecule type" value="Genomic_DNA"/>
</dbReference>
<dbReference type="PIR" id="H95133">
    <property type="entry name" value="H95133"/>
</dbReference>
<dbReference type="RefSeq" id="WP_000201098.1">
    <property type="nucleotide sequence ID" value="NZ_CP155539.1"/>
</dbReference>
<dbReference type="SMR" id="Q97QP5"/>
<dbReference type="PaxDb" id="170187-SP_1156"/>
<dbReference type="EnsemblBacteria" id="AAK75265">
    <property type="protein sequence ID" value="AAK75265"/>
    <property type="gene ID" value="SP_1156"/>
</dbReference>
<dbReference type="KEGG" id="spn:SP_1156"/>
<dbReference type="eggNOG" id="COG0164">
    <property type="taxonomic scope" value="Bacteria"/>
</dbReference>
<dbReference type="PhylomeDB" id="Q97QP5"/>
<dbReference type="BioCyc" id="SPNE170187:G1FZB-1177-MONOMER"/>
<dbReference type="Proteomes" id="UP000000585">
    <property type="component" value="Chromosome"/>
</dbReference>
<dbReference type="GO" id="GO:0005737">
    <property type="term" value="C:cytoplasm"/>
    <property type="evidence" value="ECO:0007669"/>
    <property type="project" value="UniProtKB-SubCell"/>
</dbReference>
<dbReference type="GO" id="GO:0032299">
    <property type="term" value="C:ribonuclease H2 complex"/>
    <property type="evidence" value="ECO:0007669"/>
    <property type="project" value="TreeGrafter"/>
</dbReference>
<dbReference type="GO" id="GO:0030145">
    <property type="term" value="F:manganese ion binding"/>
    <property type="evidence" value="ECO:0007669"/>
    <property type="project" value="UniProtKB-UniRule"/>
</dbReference>
<dbReference type="GO" id="GO:0003723">
    <property type="term" value="F:RNA binding"/>
    <property type="evidence" value="ECO:0007669"/>
    <property type="project" value="InterPro"/>
</dbReference>
<dbReference type="GO" id="GO:0004523">
    <property type="term" value="F:RNA-DNA hybrid ribonuclease activity"/>
    <property type="evidence" value="ECO:0007669"/>
    <property type="project" value="UniProtKB-UniRule"/>
</dbReference>
<dbReference type="GO" id="GO:0043137">
    <property type="term" value="P:DNA replication, removal of RNA primer"/>
    <property type="evidence" value="ECO:0007669"/>
    <property type="project" value="TreeGrafter"/>
</dbReference>
<dbReference type="GO" id="GO:0006298">
    <property type="term" value="P:mismatch repair"/>
    <property type="evidence" value="ECO:0007669"/>
    <property type="project" value="TreeGrafter"/>
</dbReference>
<dbReference type="CDD" id="cd07182">
    <property type="entry name" value="RNase_HII_bacteria_HII_like"/>
    <property type="match status" value="1"/>
</dbReference>
<dbReference type="FunFam" id="3.30.420.10:FF:000006">
    <property type="entry name" value="Ribonuclease HII"/>
    <property type="match status" value="1"/>
</dbReference>
<dbReference type="Gene3D" id="3.30.420.10">
    <property type="entry name" value="Ribonuclease H-like superfamily/Ribonuclease H"/>
    <property type="match status" value="1"/>
</dbReference>
<dbReference type="HAMAP" id="MF_00052_B">
    <property type="entry name" value="RNase_HII_B"/>
    <property type="match status" value="1"/>
</dbReference>
<dbReference type="InterPro" id="IPR022898">
    <property type="entry name" value="RNase_HII"/>
</dbReference>
<dbReference type="InterPro" id="IPR001352">
    <property type="entry name" value="RNase_HII/HIII"/>
</dbReference>
<dbReference type="InterPro" id="IPR024567">
    <property type="entry name" value="RNase_HII/HIII_dom"/>
</dbReference>
<dbReference type="InterPro" id="IPR012337">
    <property type="entry name" value="RNaseH-like_sf"/>
</dbReference>
<dbReference type="InterPro" id="IPR036397">
    <property type="entry name" value="RNaseH_sf"/>
</dbReference>
<dbReference type="NCBIfam" id="NF000594">
    <property type="entry name" value="PRK00015.1-1"/>
    <property type="match status" value="1"/>
</dbReference>
<dbReference type="NCBIfam" id="NF000595">
    <property type="entry name" value="PRK00015.1-3"/>
    <property type="match status" value="1"/>
</dbReference>
<dbReference type="PANTHER" id="PTHR10954">
    <property type="entry name" value="RIBONUCLEASE H2 SUBUNIT A"/>
    <property type="match status" value="1"/>
</dbReference>
<dbReference type="PANTHER" id="PTHR10954:SF18">
    <property type="entry name" value="RIBONUCLEASE HII"/>
    <property type="match status" value="1"/>
</dbReference>
<dbReference type="Pfam" id="PF01351">
    <property type="entry name" value="RNase_HII"/>
    <property type="match status" value="1"/>
</dbReference>
<dbReference type="SUPFAM" id="SSF53098">
    <property type="entry name" value="Ribonuclease H-like"/>
    <property type="match status" value="1"/>
</dbReference>
<dbReference type="PROSITE" id="PS51975">
    <property type="entry name" value="RNASE_H_2"/>
    <property type="match status" value="1"/>
</dbReference>
<proteinExistence type="inferred from homology"/>
<gene>
    <name evidence="1" type="primary">rnhB</name>
    <name type="ordered locus">SP_1156</name>
</gene>
<keyword id="KW-0963">Cytoplasm</keyword>
<keyword id="KW-0255">Endonuclease</keyword>
<keyword id="KW-0378">Hydrolase</keyword>
<keyword id="KW-0464">Manganese</keyword>
<keyword id="KW-0479">Metal-binding</keyword>
<keyword id="KW-0540">Nuclease</keyword>
<keyword id="KW-1185">Reference proteome</keyword>
<comment type="function">
    <text evidence="1">Endonuclease that specifically degrades the RNA of RNA-DNA hybrids.</text>
</comment>
<comment type="catalytic activity">
    <reaction evidence="1">
        <text>Endonucleolytic cleavage to 5'-phosphomonoester.</text>
        <dbReference type="EC" id="3.1.26.4"/>
    </reaction>
</comment>
<comment type="cofactor">
    <cofactor evidence="1">
        <name>Mn(2+)</name>
        <dbReference type="ChEBI" id="CHEBI:29035"/>
    </cofactor>
    <cofactor evidence="1">
        <name>Mg(2+)</name>
        <dbReference type="ChEBI" id="CHEBI:18420"/>
    </cofactor>
    <text evidence="1">Manganese or magnesium. Binds 1 divalent metal ion per monomer in the absence of substrate. May bind a second metal ion after substrate binding.</text>
</comment>
<comment type="subcellular location">
    <subcellularLocation>
        <location evidence="1">Cytoplasm</location>
    </subcellularLocation>
</comment>
<comment type="similarity">
    <text evidence="1">Belongs to the RNase HII family.</text>
</comment>
<name>RNH2_STRPN</name>